<proteinExistence type="evidence at protein level"/>
<sequence>MRSKGYRRGTRYLFSQDHRKHGVAHVSKYLEKYEIGDMVDILVNPAMMKGMPHKYYHGRTGRVYDVKPRSLNVALYKRVRGKYVIKKIIVRIEHVRKSRCSEESQKRILMAAEMARDAESRGVVLAPSKRKIEGPRKAVEVSLDNNQPIEVGYEPHVVIF</sequence>
<feature type="chain" id="PRO_0000149679" description="Large ribosomal subunit protein eL21">
    <location>
        <begin position="1"/>
        <end position="160"/>
    </location>
</feature>
<name>RL21_ENCCU</name>
<gene>
    <name type="primary">RPL21</name>
    <name type="ordered locus">ECU05_0900</name>
</gene>
<keyword id="KW-0002">3D-structure</keyword>
<keyword id="KW-1185">Reference proteome</keyword>
<keyword id="KW-0687">Ribonucleoprotein</keyword>
<keyword id="KW-0689">Ribosomal protein</keyword>
<protein>
    <recommendedName>
        <fullName evidence="1">Large ribosomal subunit protein eL21</fullName>
    </recommendedName>
    <alternativeName>
        <fullName>60S ribosomal protein L21</fullName>
    </alternativeName>
</protein>
<comment type="similarity">
    <text evidence="1">Belongs to the eukaryotic ribosomal protein eL21 family.</text>
</comment>
<dbReference type="EMBL" id="AL590445">
    <property type="protein sequence ID" value="CAD26610.1"/>
    <property type="molecule type" value="Genomic_DNA"/>
</dbReference>
<dbReference type="RefSeq" id="NP_597433.1">
    <property type="nucleotide sequence ID" value="NM_001041299.1"/>
</dbReference>
<dbReference type="PDB" id="7QEP">
    <property type="method" value="EM"/>
    <property type="resolution" value="2.70 A"/>
    <property type="chains" value="N1=1-160"/>
</dbReference>
<dbReference type="PDBsum" id="7QEP"/>
<dbReference type="EMDB" id="EMD-13936"/>
<dbReference type="SMR" id="Q8SRW8"/>
<dbReference type="FunCoup" id="Q8SRW8">
    <property type="interactions" value="226"/>
</dbReference>
<dbReference type="STRING" id="284813.Q8SRW8"/>
<dbReference type="GeneID" id="859099"/>
<dbReference type="KEGG" id="ecu:ECU05_0900"/>
<dbReference type="VEuPathDB" id="MicrosporidiaDB:ECU05_0900"/>
<dbReference type="HOGENOM" id="CLU_103610_0_1_1"/>
<dbReference type="InParanoid" id="Q8SRW8"/>
<dbReference type="OMA" id="KGMPHRT"/>
<dbReference type="OrthoDB" id="1539250at2759"/>
<dbReference type="Proteomes" id="UP000000819">
    <property type="component" value="Chromosome V"/>
</dbReference>
<dbReference type="GO" id="GO:1990904">
    <property type="term" value="C:ribonucleoprotein complex"/>
    <property type="evidence" value="ECO:0007669"/>
    <property type="project" value="UniProtKB-KW"/>
</dbReference>
<dbReference type="GO" id="GO:0005840">
    <property type="term" value="C:ribosome"/>
    <property type="evidence" value="ECO:0007669"/>
    <property type="project" value="UniProtKB-KW"/>
</dbReference>
<dbReference type="GO" id="GO:0003735">
    <property type="term" value="F:structural constituent of ribosome"/>
    <property type="evidence" value="ECO:0007669"/>
    <property type="project" value="InterPro"/>
</dbReference>
<dbReference type="GO" id="GO:0006412">
    <property type="term" value="P:translation"/>
    <property type="evidence" value="ECO:0007669"/>
    <property type="project" value="InterPro"/>
</dbReference>
<dbReference type="FunFam" id="2.30.30.70:FF:000001">
    <property type="entry name" value="60S ribosomal protein L21"/>
    <property type="match status" value="1"/>
</dbReference>
<dbReference type="Gene3D" id="2.30.30.70">
    <property type="entry name" value="Ribosomal protein L21"/>
    <property type="match status" value="1"/>
</dbReference>
<dbReference type="InterPro" id="IPR001147">
    <property type="entry name" value="Ribosomal_eL21"/>
</dbReference>
<dbReference type="InterPro" id="IPR018259">
    <property type="entry name" value="Ribosomal_eL21_CS"/>
</dbReference>
<dbReference type="InterPro" id="IPR036948">
    <property type="entry name" value="Ribosomal_eL21_sf"/>
</dbReference>
<dbReference type="InterPro" id="IPR008991">
    <property type="entry name" value="Translation_prot_SH3-like_sf"/>
</dbReference>
<dbReference type="PANTHER" id="PTHR20981">
    <property type="entry name" value="60S RIBOSOMAL PROTEIN L21"/>
    <property type="match status" value="1"/>
</dbReference>
<dbReference type="Pfam" id="PF01157">
    <property type="entry name" value="Ribosomal_L21e"/>
    <property type="match status" value="1"/>
</dbReference>
<dbReference type="SUPFAM" id="SSF50104">
    <property type="entry name" value="Translation proteins SH3-like domain"/>
    <property type="match status" value="1"/>
</dbReference>
<dbReference type="PROSITE" id="PS01171">
    <property type="entry name" value="RIBOSOMAL_L21E"/>
    <property type="match status" value="1"/>
</dbReference>
<organism>
    <name type="scientific">Encephalitozoon cuniculi (strain GB-M1)</name>
    <name type="common">Microsporidian parasite</name>
    <dbReference type="NCBI Taxonomy" id="284813"/>
    <lineage>
        <taxon>Eukaryota</taxon>
        <taxon>Fungi</taxon>
        <taxon>Fungi incertae sedis</taxon>
        <taxon>Microsporidia</taxon>
        <taxon>Unikaryonidae</taxon>
        <taxon>Encephalitozoon</taxon>
    </lineage>
</organism>
<reference key="1">
    <citation type="journal article" date="2001" name="Nature">
        <title>Genome sequence and gene compaction of the eukaryote parasite Encephalitozoon cuniculi.</title>
        <authorList>
            <person name="Katinka M.D."/>
            <person name="Duprat S."/>
            <person name="Cornillot E."/>
            <person name="Metenier G."/>
            <person name="Thomarat F."/>
            <person name="Prensier G."/>
            <person name="Barbe V."/>
            <person name="Peyretaillade E."/>
            <person name="Brottier P."/>
            <person name="Wincker P."/>
            <person name="Delbac F."/>
            <person name="El Alaoui H."/>
            <person name="Peyret P."/>
            <person name="Saurin W."/>
            <person name="Gouy M."/>
            <person name="Weissenbach J."/>
            <person name="Vivares C.P."/>
        </authorList>
    </citation>
    <scope>NUCLEOTIDE SEQUENCE [LARGE SCALE GENOMIC DNA]</scope>
    <source>
        <strain>GB-M1</strain>
    </source>
</reference>
<accession>Q8SRW8</accession>
<evidence type="ECO:0000305" key="1"/>